<name>DDA1_MOUSE</name>
<accession>Q9D9Z5</accession>
<accession>Q3UDQ1</accession>
<protein>
    <recommendedName>
        <fullName evidence="1">DET1- and DDB1-associated protein 1</fullName>
    </recommendedName>
</protein>
<feature type="initiator methionine" description="Removed" evidence="1">
    <location>
        <position position="1"/>
    </location>
</feature>
<feature type="chain" id="PRO_0000310271" description="DET1- and DDB1-associated protein 1">
    <location>
        <begin position="2"/>
        <end position="102"/>
    </location>
</feature>
<feature type="region of interest" description="Disordered" evidence="2">
    <location>
        <begin position="67"/>
        <end position="102"/>
    </location>
</feature>
<feature type="modified residue" description="N-acetylalanine" evidence="1">
    <location>
        <position position="2"/>
    </location>
</feature>
<feature type="modified residue" description="Phosphoserine" evidence="1">
    <location>
        <position position="33"/>
    </location>
</feature>
<feature type="modified residue" description="Phosphoserine" evidence="1">
    <location>
        <position position="95"/>
    </location>
</feature>
<reference key="1">
    <citation type="journal article" date="2005" name="Science">
        <title>The transcriptional landscape of the mammalian genome.</title>
        <authorList>
            <person name="Carninci P."/>
            <person name="Kasukawa T."/>
            <person name="Katayama S."/>
            <person name="Gough J."/>
            <person name="Frith M.C."/>
            <person name="Maeda N."/>
            <person name="Oyama R."/>
            <person name="Ravasi T."/>
            <person name="Lenhard B."/>
            <person name="Wells C."/>
            <person name="Kodzius R."/>
            <person name="Shimokawa K."/>
            <person name="Bajic V.B."/>
            <person name="Brenner S.E."/>
            <person name="Batalov S."/>
            <person name="Forrest A.R."/>
            <person name="Zavolan M."/>
            <person name="Davis M.J."/>
            <person name="Wilming L.G."/>
            <person name="Aidinis V."/>
            <person name="Allen J.E."/>
            <person name="Ambesi-Impiombato A."/>
            <person name="Apweiler R."/>
            <person name="Aturaliya R.N."/>
            <person name="Bailey T.L."/>
            <person name="Bansal M."/>
            <person name="Baxter L."/>
            <person name="Beisel K.W."/>
            <person name="Bersano T."/>
            <person name="Bono H."/>
            <person name="Chalk A.M."/>
            <person name="Chiu K.P."/>
            <person name="Choudhary V."/>
            <person name="Christoffels A."/>
            <person name="Clutterbuck D.R."/>
            <person name="Crowe M.L."/>
            <person name="Dalla E."/>
            <person name="Dalrymple B.P."/>
            <person name="de Bono B."/>
            <person name="Della Gatta G."/>
            <person name="di Bernardo D."/>
            <person name="Down T."/>
            <person name="Engstrom P."/>
            <person name="Fagiolini M."/>
            <person name="Faulkner G."/>
            <person name="Fletcher C.F."/>
            <person name="Fukushima T."/>
            <person name="Furuno M."/>
            <person name="Futaki S."/>
            <person name="Gariboldi M."/>
            <person name="Georgii-Hemming P."/>
            <person name="Gingeras T.R."/>
            <person name="Gojobori T."/>
            <person name="Green R.E."/>
            <person name="Gustincich S."/>
            <person name="Harbers M."/>
            <person name="Hayashi Y."/>
            <person name="Hensch T.K."/>
            <person name="Hirokawa N."/>
            <person name="Hill D."/>
            <person name="Huminiecki L."/>
            <person name="Iacono M."/>
            <person name="Ikeo K."/>
            <person name="Iwama A."/>
            <person name="Ishikawa T."/>
            <person name="Jakt M."/>
            <person name="Kanapin A."/>
            <person name="Katoh M."/>
            <person name="Kawasawa Y."/>
            <person name="Kelso J."/>
            <person name="Kitamura H."/>
            <person name="Kitano H."/>
            <person name="Kollias G."/>
            <person name="Krishnan S.P."/>
            <person name="Kruger A."/>
            <person name="Kummerfeld S.K."/>
            <person name="Kurochkin I.V."/>
            <person name="Lareau L.F."/>
            <person name="Lazarevic D."/>
            <person name="Lipovich L."/>
            <person name="Liu J."/>
            <person name="Liuni S."/>
            <person name="McWilliam S."/>
            <person name="Madan Babu M."/>
            <person name="Madera M."/>
            <person name="Marchionni L."/>
            <person name="Matsuda H."/>
            <person name="Matsuzawa S."/>
            <person name="Miki H."/>
            <person name="Mignone F."/>
            <person name="Miyake S."/>
            <person name="Morris K."/>
            <person name="Mottagui-Tabar S."/>
            <person name="Mulder N."/>
            <person name="Nakano N."/>
            <person name="Nakauchi H."/>
            <person name="Ng P."/>
            <person name="Nilsson R."/>
            <person name="Nishiguchi S."/>
            <person name="Nishikawa S."/>
            <person name="Nori F."/>
            <person name="Ohara O."/>
            <person name="Okazaki Y."/>
            <person name="Orlando V."/>
            <person name="Pang K.C."/>
            <person name="Pavan W.J."/>
            <person name="Pavesi G."/>
            <person name="Pesole G."/>
            <person name="Petrovsky N."/>
            <person name="Piazza S."/>
            <person name="Reed J."/>
            <person name="Reid J.F."/>
            <person name="Ring B.Z."/>
            <person name="Ringwald M."/>
            <person name="Rost B."/>
            <person name="Ruan Y."/>
            <person name="Salzberg S.L."/>
            <person name="Sandelin A."/>
            <person name="Schneider C."/>
            <person name="Schoenbach C."/>
            <person name="Sekiguchi K."/>
            <person name="Semple C.A."/>
            <person name="Seno S."/>
            <person name="Sessa L."/>
            <person name="Sheng Y."/>
            <person name="Shibata Y."/>
            <person name="Shimada H."/>
            <person name="Shimada K."/>
            <person name="Silva D."/>
            <person name="Sinclair B."/>
            <person name="Sperling S."/>
            <person name="Stupka E."/>
            <person name="Sugiura K."/>
            <person name="Sultana R."/>
            <person name="Takenaka Y."/>
            <person name="Taki K."/>
            <person name="Tammoja K."/>
            <person name="Tan S.L."/>
            <person name="Tang S."/>
            <person name="Taylor M.S."/>
            <person name="Tegner J."/>
            <person name="Teichmann S.A."/>
            <person name="Ueda H.R."/>
            <person name="van Nimwegen E."/>
            <person name="Verardo R."/>
            <person name="Wei C.L."/>
            <person name="Yagi K."/>
            <person name="Yamanishi H."/>
            <person name="Zabarovsky E."/>
            <person name="Zhu S."/>
            <person name="Zimmer A."/>
            <person name="Hide W."/>
            <person name="Bult C."/>
            <person name="Grimmond S.M."/>
            <person name="Teasdale R.D."/>
            <person name="Liu E.T."/>
            <person name="Brusic V."/>
            <person name="Quackenbush J."/>
            <person name="Wahlestedt C."/>
            <person name="Mattick J.S."/>
            <person name="Hume D.A."/>
            <person name="Kai C."/>
            <person name="Sasaki D."/>
            <person name="Tomaru Y."/>
            <person name="Fukuda S."/>
            <person name="Kanamori-Katayama M."/>
            <person name="Suzuki M."/>
            <person name="Aoki J."/>
            <person name="Arakawa T."/>
            <person name="Iida J."/>
            <person name="Imamura K."/>
            <person name="Itoh M."/>
            <person name="Kato T."/>
            <person name="Kawaji H."/>
            <person name="Kawagashira N."/>
            <person name="Kawashima T."/>
            <person name="Kojima M."/>
            <person name="Kondo S."/>
            <person name="Konno H."/>
            <person name="Nakano K."/>
            <person name="Ninomiya N."/>
            <person name="Nishio T."/>
            <person name="Okada M."/>
            <person name="Plessy C."/>
            <person name="Shibata K."/>
            <person name="Shiraki T."/>
            <person name="Suzuki S."/>
            <person name="Tagami M."/>
            <person name="Waki K."/>
            <person name="Watahiki A."/>
            <person name="Okamura-Oho Y."/>
            <person name="Suzuki H."/>
            <person name="Kawai J."/>
            <person name="Hayashizaki Y."/>
        </authorList>
    </citation>
    <scope>NUCLEOTIDE SEQUENCE [LARGE SCALE MRNA]</scope>
    <source>
        <strain>C57BL/6J</strain>
        <strain>DBA/2J</strain>
        <tissue>Testis</tissue>
        <tissue>Wolffian duct</tissue>
    </source>
</reference>
<reference key="2">
    <citation type="journal article" date="2004" name="Genome Res.">
        <title>The status, quality, and expansion of the NIH full-length cDNA project: the Mammalian Gene Collection (MGC).</title>
        <authorList>
            <consortium name="The MGC Project Team"/>
        </authorList>
    </citation>
    <scope>NUCLEOTIDE SEQUENCE [LARGE SCALE MRNA]</scope>
    <source>
        <strain>Czech II</strain>
        <strain>FVB/N</strain>
        <tissue>Mammary tumor</tissue>
    </source>
</reference>
<reference key="3">
    <citation type="journal article" date="2010" name="Cell">
        <title>A tissue-specific atlas of mouse protein phosphorylation and expression.</title>
        <authorList>
            <person name="Huttlin E.L."/>
            <person name="Jedrychowski M.P."/>
            <person name="Elias J.E."/>
            <person name="Goswami T."/>
            <person name="Rad R."/>
            <person name="Beausoleil S.A."/>
            <person name="Villen J."/>
            <person name="Haas W."/>
            <person name="Sowa M.E."/>
            <person name="Gygi S.P."/>
        </authorList>
    </citation>
    <scope>IDENTIFICATION BY MASS SPECTROMETRY [LARGE SCALE ANALYSIS]</scope>
    <source>
        <tissue>Liver</tissue>
        <tissue>Pancreas</tissue>
        <tissue>Testis</tissue>
    </source>
</reference>
<dbReference type="EMBL" id="AK006318">
    <property type="protein sequence ID" value="BAB24524.1"/>
    <property type="molecule type" value="mRNA"/>
</dbReference>
<dbReference type="EMBL" id="AK032966">
    <property type="protein sequence ID" value="BAC28103.1"/>
    <property type="molecule type" value="mRNA"/>
</dbReference>
<dbReference type="EMBL" id="AK149980">
    <property type="protein sequence ID" value="BAE29210.1"/>
    <property type="molecule type" value="mRNA"/>
</dbReference>
<dbReference type="EMBL" id="AK168085">
    <property type="protein sequence ID" value="BAE40058.1"/>
    <property type="molecule type" value="mRNA"/>
</dbReference>
<dbReference type="EMBL" id="BC034701">
    <property type="protein sequence ID" value="AAH34701.1"/>
    <property type="molecule type" value="mRNA"/>
</dbReference>
<dbReference type="EMBL" id="BC093523">
    <property type="protein sequence ID" value="AAH93523.1"/>
    <property type="molecule type" value="mRNA"/>
</dbReference>
<dbReference type="CCDS" id="CCDS52584.1"/>
<dbReference type="RefSeq" id="NP_001281187.1">
    <property type="nucleotide sequence ID" value="NM_001294258.1"/>
</dbReference>
<dbReference type="RefSeq" id="NP_001281188.1">
    <property type="nucleotide sequence ID" value="NM_001294259.1"/>
</dbReference>
<dbReference type="RefSeq" id="NP_079876.1">
    <property type="nucleotide sequence ID" value="NM_025600.2"/>
</dbReference>
<dbReference type="SMR" id="Q9D9Z5"/>
<dbReference type="BioGRID" id="211519">
    <property type="interactions" value="11"/>
</dbReference>
<dbReference type="FunCoup" id="Q9D9Z5">
    <property type="interactions" value="185"/>
</dbReference>
<dbReference type="IntAct" id="Q9D9Z5">
    <property type="interactions" value="6"/>
</dbReference>
<dbReference type="STRING" id="10090.ENSMUSP00000121042"/>
<dbReference type="GlyGen" id="Q9D9Z5">
    <property type="glycosylation" value="1 site, 1 O-linked glycan (1 site)"/>
</dbReference>
<dbReference type="iPTMnet" id="Q9D9Z5"/>
<dbReference type="PhosphoSitePlus" id="Q9D9Z5"/>
<dbReference type="jPOST" id="Q9D9Z5"/>
<dbReference type="PaxDb" id="10090-ENSMUSP00000121042"/>
<dbReference type="PeptideAtlas" id="Q9D9Z5"/>
<dbReference type="ProteomicsDB" id="279608"/>
<dbReference type="Pumba" id="Q9D9Z5"/>
<dbReference type="Antibodypedia" id="43757">
    <property type="antibodies" value="166 antibodies from 26 providers"/>
</dbReference>
<dbReference type="DNASU" id="66498"/>
<dbReference type="Ensembl" id="ENSMUST00000124745.8">
    <property type="protein sequence ID" value="ENSMUSP00000121042.2"/>
    <property type="gene ID" value="ENSMUSG00000074247.11"/>
</dbReference>
<dbReference type="GeneID" id="66498"/>
<dbReference type="KEGG" id="mmu:66498"/>
<dbReference type="UCSC" id="uc009mdi.3">
    <property type="organism name" value="mouse"/>
</dbReference>
<dbReference type="AGR" id="MGI:1913748"/>
<dbReference type="CTD" id="79016"/>
<dbReference type="MGI" id="MGI:1913748">
    <property type="gene designation" value="Dda1"/>
</dbReference>
<dbReference type="VEuPathDB" id="HostDB:ENSMUSG00000074247"/>
<dbReference type="eggNOG" id="KOG4816">
    <property type="taxonomic scope" value="Eukaryota"/>
</dbReference>
<dbReference type="GeneTree" id="ENSGT00390000007029"/>
<dbReference type="HOGENOM" id="CLU_144562_1_0_1"/>
<dbReference type="InParanoid" id="Q9D9Z5"/>
<dbReference type="OMA" id="HANCLCK"/>
<dbReference type="PhylomeDB" id="Q9D9Z5"/>
<dbReference type="TreeFam" id="TF323534"/>
<dbReference type="Reactome" id="R-MMU-8951664">
    <property type="pathway name" value="Neddylation"/>
</dbReference>
<dbReference type="UniPathway" id="UPA00143"/>
<dbReference type="BioGRID-ORCS" id="66498">
    <property type="hits" value="14 hits in 77 CRISPR screens"/>
</dbReference>
<dbReference type="ChiTaRS" id="Dda1">
    <property type="organism name" value="mouse"/>
</dbReference>
<dbReference type="PRO" id="PR:Q9D9Z5"/>
<dbReference type="Proteomes" id="UP000000589">
    <property type="component" value="Chromosome 8"/>
</dbReference>
<dbReference type="RNAct" id="Q9D9Z5">
    <property type="molecule type" value="protein"/>
</dbReference>
<dbReference type="Bgee" id="ENSMUSG00000074247">
    <property type="expression patterns" value="Expressed in embryonic brain and 263 other cell types or tissues"/>
</dbReference>
<dbReference type="ExpressionAtlas" id="Q9D9Z5">
    <property type="expression patterns" value="baseline and differential"/>
</dbReference>
<dbReference type="GO" id="GO:0080008">
    <property type="term" value="C:Cul4-RING E3 ubiquitin ligase complex"/>
    <property type="evidence" value="ECO:0000250"/>
    <property type="project" value="UniProtKB"/>
</dbReference>
<dbReference type="GO" id="GO:0000209">
    <property type="term" value="P:protein polyubiquitination"/>
    <property type="evidence" value="ECO:0000250"/>
    <property type="project" value="UniProtKB"/>
</dbReference>
<dbReference type="GO" id="GO:0032434">
    <property type="term" value="P:regulation of proteasomal ubiquitin-dependent protein catabolic process"/>
    <property type="evidence" value="ECO:0007669"/>
    <property type="project" value="InterPro"/>
</dbReference>
<dbReference type="InterPro" id="IPR033575">
    <property type="entry name" value="DDA1-like"/>
</dbReference>
<dbReference type="InterPro" id="IPR018276">
    <property type="entry name" value="DDA1_dom"/>
</dbReference>
<dbReference type="PANTHER" id="PTHR31879">
    <property type="entry name" value="DET1- AND DDB1-ASSOCIATED PROTEIN 1"/>
    <property type="match status" value="1"/>
</dbReference>
<dbReference type="PANTHER" id="PTHR31879:SF2">
    <property type="entry name" value="DET1- AND DDB1-ASSOCIATED PROTEIN 1"/>
    <property type="match status" value="1"/>
</dbReference>
<dbReference type="Pfam" id="PF10172">
    <property type="entry name" value="DDA1"/>
    <property type="match status" value="1"/>
</dbReference>
<comment type="function">
    <text evidence="1">Functions as a component of numerous distinct DCX (DDB1-CUL4-X-box) E3 ubiquitin-protein ligase complexes which mediate the ubiquitination and subsequent proteasomal degradation of target proteins. In the DCX complexes, acts as a scaffolding subunit required to stabilize the complex.</text>
</comment>
<comment type="pathway">
    <text evidence="1">Protein modification; protein ubiquitination.</text>
</comment>
<comment type="subunit">
    <text evidence="1">Component of numerous DCX (DDB1-CUL4-X-box) E3 ubiquitin-protein ligase complexes which consist of a core of DDB1, cullin-4 (CUL4A or CUL4B), DDA1 and RBX1. Component of the DCX(DCAF15) complex, also named CLR4(DCAF15) complex, composed of DCAF15, DDB1, cullin-4 (CUL4A or CUL4B), DDA1 and RBX1. Part of the DDD core complex containing DET1, DDA1 and DDB1; the DDD core complex recruits a specific UBE2E enzyme, such as UBE2E1, UBE2E2 UBE2E3, to form specific DDD-E2 complexes.</text>
</comment>
<comment type="similarity">
    <text evidence="3">Belongs to the DDA1 family.</text>
</comment>
<evidence type="ECO:0000250" key="1">
    <source>
        <dbReference type="UniProtKB" id="Q9BW61"/>
    </source>
</evidence>
<evidence type="ECO:0000256" key="2">
    <source>
        <dbReference type="SAM" id="MobiDB-lite"/>
    </source>
</evidence>
<evidence type="ECO:0000305" key="3"/>
<evidence type="ECO:0000312" key="4">
    <source>
        <dbReference type="MGI" id="MGI:1913748"/>
    </source>
</evidence>
<gene>
    <name evidence="4" type="primary">Dda1</name>
</gene>
<keyword id="KW-0007">Acetylation</keyword>
<keyword id="KW-0597">Phosphoprotein</keyword>
<keyword id="KW-1185">Reference proteome</keyword>
<keyword id="KW-0833">Ubl conjugation pathway</keyword>
<proteinExistence type="evidence at protein level"/>
<organism>
    <name type="scientific">Mus musculus</name>
    <name type="common">Mouse</name>
    <dbReference type="NCBI Taxonomy" id="10090"/>
    <lineage>
        <taxon>Eukaryota</taxon>
        <taxon>Metazoa</taxon>
        <taxon>Chordata</taxon>
        <taxon>Craniata</taxon>
        <taxon>Vertebrata</taxon>
        <taxon>Euteleostomi</taxon>
        <taxon>Mammalia</taxon>
        <taxon>Eutheria</taxon>
        <taxon>Euarchontoglires</taxon>
        <taxon>Glires</taxon>
        <taxon>Rodentia</taxon>
        <taxon>Myomorpha</taxon>
        <taxon>Muroidea</taxon>
        <taxon>Muridae</taxon>
        <taxon>Murinae</taxon>
        <taxon>Mus</taxon>
        <taxon>Mus</taxon>
    </lineage>
</organism>
<sequence length="102" mass="11753">MADFLKGLPVYNKSNFSRFHADSVCKASNRRPSVYLPTREYPSEQIIVTEKTNILLRYLHQQWDKKNAAKKRDQEQVEAEGESSAPPRKVARTDSPDMPEDT</sequence>